<proteinExistence type="inferred from homology"/>
<organism>
    <name type="scientific">Burkholderia pseudomallei (strain 1710b)</name>
    <dbReference type="NCBI Taxonomy" id="320372"/>
    <lineage>
        <taxon>Bacteria</taxon>
        <taxon>Pseudomonadati</taxon>
        <taxon>Pseudomonadota</taxon>
        <taxon>Betaproteobacteria</taxon>
        <taxon>Burkholderiales</taxon>
        <taxon>Burkholderiaceae</taxon>
        <taxon>Burkholderia</taxon>
        <taxon>pseudomallei group</taxon>
    </lineage>
</organism>
<comment type="catalytic activity">
    <reaction evidence="1">
        <text>tRNA(Leu) + L-leucine + ATP = L-leucyl-tRNA(Leu) + AMP + diphosphate</text>
        <dbReference type="Rhea" id="RHEA:11688"/>
        <dbReference type="Rhea" id="RHEA-COMP:9613"/>
        <dbReference type="Rhea" id="RHEA-COMP:9622"/>
        <dbReference type="ChEBI" id="CHEBI:30616"/>
        <dbReference type="ChEBI" id="CHEBI:33019"/>
        <dbReference type="ChEBI" id="CHEBI:57427"/>
        <dbReference type="ChEBI" id="CHEBI:78442"/>
        <dbReference type="ChEBI" id="CHEBI:78494"/>
        <dbReference type="ChEBI" id="CHEBI:456215"/>
        <dbReference type="EC" id="6.1.1.4"/>
    </reaction>
</comment>
<comment type="subcellular location">
    <subcellularLocation>
        <location evidence="1">Cytoplasm</location>
    </subcellularLocation>
</comment>
<comment type="similarity">
    <text evidence="1">Belongs to the class-I aminoacyl-tRNA synthetase family.</text>
</comment>
<comment type="sequence caution" evidence="2">
    <conflict type="erroneous initiation">
        <sequence resource="EMBL-CDS" id="ABA47866"/>
    </conflict>
</comment>
<gene>
    <name evidence="1" type="primary">leuS</name>
    <name type="ordered locus">BURPS1710b_3451</name>
</gene>
<evidence type="ECO:0000255" key="1">
    <source>
        <dbReference type="HAMAP-Rule" id="MF_00049"/>
    </source>
</evidence>
<evidence type="ECO:0000305" key="2"/>
<feature type="chain" id="PRO_0000334736" description="Leucine--tRNA ligase">
    <location>
        <begin position="1"/>
        <end position="864"/>
    </location>
</feature>
<feature type="short sequence motif" description="'HIGH' region">
    <location>
        <begin position="42"/>
        <end position="52"/>
    </location>
</feature>
<feature type="short sequence motif" description="'KMSKS' region">
    <location>
        <begin position="624"/>
        <end position="628"/>
    </location>
</feature>
<feature type="binding site" evidence="1">
    <location>
        <position position="627"/>
    </location>
    <ligand>
        <name>ATP</name>
        <dbReference type="ChEBI" id="CHEBI:30616"/>
    </ligand>
</feature>
<protein>
    <recommendedName>
        <fullName evidence="1">Leucine--tRNA ligase</fullName>
        <ecNumber evidence="1">6.1.1.4</ecNumber>
    </recommendedName>
    <alternativeName>
        <fullName evidence="1">Leucyl-tRNA synthetase</fullName>
        <shortName evidence="1">LeuRS</shortName>
    </alternativeName>
</protein>
<accession>Q3JNN1</accession>
<keyword id="KW-0030">Aminoacyl-tRNA synthetase</keyword>
<keyword id="KW-0067">ATP-binding</keyword>
<keyword id="KW-0963">Cytoplasm</keyword>
<keyword id="KW-0436">Ligase</keyword>
<keyword id="KW-0547">Nucleotide-binding</keyword>
<keyword id="KW-0648">Protein biosynthesis</keyword>
<name>SYL_BURP1</name>
<sequence length="864" mass="96239">MHERYVPADVEAAAQSDWRAADAYRSKEDANRKKFYCVSMLPYPSGKLHMGHVRNYTINDVMYRYLRMNGYNTLMPMGWDAFGMPAENAAMANGVPPAQWTYENIAYMKKQMQSMGLAIDWSREVTTCKPDYYKWNQWLFLKMLEKGVAYKKTGTVNWDPVDQTVLANEQVIDGRGWRSGALVEKREIPMYYMRITQYADELLNDLDGLGWPERVKVMQHNWIGKSFGVNFGFPYELDGEKKLLRVFTTRADTIMGVTFCAIAAEHPLAARLARDKPALQAFIDECKRGGVAEADIATMEKKGVATGFSVSHPLTGEPVEVWIGNYVLMSYGEGAVMGVPAHDERDFAFAKKYGLPIRQVIAVEGETYSTDAWQEWYGDKTRAVCVNSGKYDGLAHDAAVDAIAAELKAGGLGDKQITYRLRDWGISRQRYWGTPIPIIHCPSCGDVPVPEQDLPVVLPEDLVPDGTGNPLAKSDAFLNCTCPKCGAAAKRETDTMDTFVDSAWYFSRYAAPDAQTMVDARTDYWMPMDQYIGGIEHAILHLLYSRFWAKVMRDLGLVAFGEPAKNLLTQGMVLNETFYREDAAGKKTWYNPADVTVSFDDKGRPVGAVLKSDGQPVELGGIEKMSKSKNNGVDPQMLIDHYGADTARLFTMFAAPPEQQLEWSGAGVDGASRFLRRVWAFGFANREALAVRAPFDAAQLAEADKTLRREIHGVLKQADFDYQRLQYNTVVSAAMKMLNAIEGAKGSTPAVLRETYGVLLRVLYPVVPHVTFELWKALGYADEFGPLLDAPWPKVDEAALEQAEIELVLQVNGKVRGALKVAKDASREAIEAAAVADEMFAKFAEGRPAKKIIVVPGRLVNVVV</sequence>
<reference key="1">
    <citation type="journal article" date="2010" name="Genome Biol. Evol.">
        <title>Continuing evolution of Burkholderia mallei through genome reduction and large-scale rearrangements.</title>
        <authorList>
            <person name="Losada L."/>
            <person name="Ronning C.M."/>
            <person name="DeShazer D."/>
            <person name="Woods D."/>
            <person name="Fedorova N."/>
            <person name="Kim H.S."/>
            <person name="Shabalina S.A."/>
            <person name="Pearson T.R."/>
            <person name="Brinkac L."/>
            <person name="Tan P."/>
            <person name="Nandi T."/>
            <person name="Crabtree J."/>
            <person name="Badger J."/>
            <person name="Beckstrom-Sternberg S."/>
            <person name="Saqib M."/>
            <person name="Schutzer S.E."/>
            <person name="Keim P."/>
            <person name="Nierman W.C."/>
        </authorList>
    </citation>
    <scope>NUCLEOTIDE SEQUENCE [LARGE SCALE GENOMIC DNA]</scope>
    <source>
        <strain>1710b</strain>
    </source>
</reference>
<dbReference type="EC" id="6.1.1.4" evidence="1"/>
<dbReference type="EMBL" id="CP000124">
    <property type="protein sequence ID" value="ABA47866.1"/>
    <property type="status" value="ALT_INIT"/>
    <property type="molecule type" value="Genomic_DNA"/>
</dbReference>
<dbReference type="RefSeq" id="WP_004527746.1">
    <property type="nucleotide sequence ID" value="NC_007434.1"/>
</dbReference>
<dbReference type="SMR" id="Q3JNN1"/>
<dbReference type="EnsemblBacteria" id="ABA47866">
    <property type="protein sequence ID" value="ABA47866"/>
    <property type="gene ID" value="BURPS1710b_3451"/>
</dbReference>
<dbReference type="KEGG" id="bpm:BURPS1710b_3451"/>
<dbReference type="HOGENOM" id="CLU_004427_0_0_4"/>
<dbReference type="Proteomes" id="UP000002700">
    <property type="component" value="Chromosome I"/>
</dbReference>
<dbReference type="GO" id="GO:0005829">
    <property type="term" value="C:cytosol"/>
    <property type="evidence" value="ECO:0007669"/>
    <property type="project" value="TreeGrafter"/>
</dbReference>
<dbReference type="GO" id="GO:0002161">
    <property type="term" value="F:aminoacyl-tRNA deacylase activity"/>
    <property type="evidence" value="ECO:0007669"/>
    <property type="project" value="InterPro"/>
</dbReference>
<dbReference type="GO" id="GO:0005524">
    <property type="term" value="F:ATP binding"/>
    <property type="evidence" value="ECO:0007669"/>
    <property type="project" value="UniProtKB-UniRule"/>
</dbReference>
<dbReference type="GO" id="GO:0004823">
    <property type="term" value="F:leucine-tRNA ligase activity"/>
    <property type="evidence" value="ECO:0007669"/>
    <property type="project" value="UniProtKB-UniRule"/>
</dbReference>
<dbReference type="GO" id="GO:0006429">
    <property type="term" value="P:leucyl-tRNA aminoacylation"/>
    <property type="evidence" value="ECO:0007669"/>
    <property type="project" value="UniProtKB-UniRule"/>
</dbReference>
<dbReference type="CDD" id="cd07958">
    <property type="entry name" value="Anticodon_Ia_Leu_BEm"/>
    <property type="match status" value="1"/>
</dbReference>
<dbReference type="CDD" id="cd00812">
    <property type="entry name" value="LeuRS_core"/>
    <property type="match status" value="1"/>
</dbReference>
<dbReference type="FunFam" id="1.10.730.10:FF:000002">
    <property type="entry name" value="Leucine--tRNA ligase"/>
    <property type="match status" value="1"/>
</dbReference>
<dbReference type="FunFam" id="2.20.28.290:FF:000001">
    <property type="entry name" value="Leucine--tRNA ligase"/>
    <property type="match status" value="1"/>
</dbReference>
<dbReference type="FunFam" id="3.10.20.590:FF:000001">
    <property type="entry name" value="Leucine--tRNA ligase"/>
    <property type="match status" value="1"/>
</dbReference>
<dbReference type="FunFam" id="3.40.50.620:FF:000003">
    <property type="entry name" value="Leucine--tRNA ligase"/>
    <property type="match status" value="1"/>
</dbReference>
<dbReference type="FunFam" id="3.40.50.620:FF:000056">
    <property type="entry name" value="Leucine--tRNA ligase"/>
    <property type="match status" value="1"/>
</dbReference>
<dbReference type="FunFam" id="3.90.740.10:FF:000012">
    <property type="entry name" value="Leucine--tRNA ligase"/>
    <property type="match status" value="1"/>
</dbReference>
<dbReference type="Gene3D" id="2.20.28.290">
    <property type="match status" value="1"/>
</dbReference>
<dbReference type="Gene3D" id="3.10.20.590">
    <property type="match status" value="1"/>
</dbReference>
<dbReference type="Gene3D" id="3.40.50.620">
    <property type="entry name" value="HUPs"/>
    <property type="match status" value="2"/>
</dbReference>
<dbReference type="Gene3D" id="1.10.730.10">
    <property type="entry name" value="Isoleucyl-tRNA Synthetase, Domain 1"/>
    <property type="match status" value="2"/>
</dbReference>
<dbReference type="Gene3D" id="3.90.740.10">
    <property type="entry name" value="Valyl/Leucyl/Isoleucyl-tRNA synthetase, editing domain"/>
    <property type="match status" value="1"/>
</dbReference>
<dbReference type="HAMAP" id="MF_00049_B">
    <property type="entry name" value="Leu_tRNA_synth_B"/>
    <property type="match status" value="1"/>
</dbReference>
<dbReference type="InterPro" id="IPR001412">
    <property type="entry name" value="aa-tRNA-synth_I_CS"/>
</dbReference>
<dbReference type="InterPro" id="IPR002300">
    <property type="entry name" value="aa-tRNA-synth_Ia"/>
</dbReference>
<dbReference type="InterPro" id="IPR002302">
    <property type="entry name" value="Leu-tRNA-ligase"/>
</dbReference>
<dbReference type="InterPro" id="IPR025709">
    <property type="entry name" value="Leu_tRNA-synth_edit"/>
</dbReference>
<dbReference type="InterPro" id="IPR013155">
    <property type="entry name" value="M/V/L/I-tRNA-synth_anticd-bd"/>
</dbReference>
<dbReference type="InterPro" id="IPR015413">
    <property type="entry name" value="Methionyl/Leucyl_tRNA_Synth"/>
</dbReference>
<dbReference type="InterPro" id="IPR014729">
    <property type="entry name" value="Rossmann-like_a/b/a_fold"/>
</dbReference>
<dbReference type="InterPro" id="IPR009080">
    <property type="entry name" value="tRNAsynth_Ia_anticodon-bd"/>
</dbReference>
<dbReference type="InterPro" id="IPR009008">
    <property type="entry name" value="Val/Leu/Ile-tRNA-synth_edit"/>
</dbReference>
<dbReference type="NCBIfam" id="TIGR00396">
    <property type="entry name" value="leuS_bact"/>
    <property type="match status" value="1"/>
</dbReference>
<dbReference type="PANTHER" id="PTHR43740:SF2">
    <property type="entry name" value="LEUCINE--TRNA LIGASE, MITOCHONDRIAL"/>
    <property type="match status" value="1"/>
</dbReference>
<dbReference type="PANTHER" id="PTHR43740">
    <property type="entry name" value="LEUCYL-TRNA SYNTHETASE"/>
    <property type="match status" value="1"/>
</dbReference>
<dbReference type="Pfam" id="PF08264">
    <property type="entry name" value="Anticodon_1"/>
    <property type="match status" value="1"/>
</dbReference>
<dbReference type="Pfam" id="PF00133">
    <property type="entry name" value="tRNA-synt_1"/>
    <property type="match status" value="2"/>
</dbReference>
<dbReference type="Pfam" id="PF13603">
    <property type="entry name" value="tRNA-synt_1_2"/>
    <property type="match status" value="1"/>
</dbReference>
<dbReference type="Pfam" id="PF09334">
    <property type="entry name" value="tRNA-synt_1g"/>
    <property type="match status" value="1"/>
</dbReference>
<dbReference type="PRINTS" id="PR00985">
    <property type="entry name" value="TRNASYNTHLEU"/>
</dbReference>
<dbReference type="SUPFAM" id="SSF47323">
    <property type="entry name" value="Anticodon-binding domain of a subclass of class I aminoacyl-tRNA synthetases"/>
    <property type="match status" value="1"/>
</dbReference>
<dbReference type="SUPFAM" id="SSF52374">
    <property type="entry name" value="Nucleotidylyl transferase"/>
    <property type="match status" value="1"/>
</dbReference>
<dbReference type="SUPFAM" id="SSF50677">
    <property type="entry name" value="ValRS/IleRS/LeuRS editing domain"/>
    <property type="match status" value="1"/>
</dbReference>
<dbReference type="PROSITE" id="PS00178">
    <property type="entry name" value="AA_TRNA_LIGASE_I"/>
    <property type="match status" value="1"/>
</dbReference>